<name>HPGDS_CHICK</name>
<sequence length="199" mass="22730">MPNYKLTYFNLRGRAEICRYLFAYAGIKYEDHRLEGADWPKIKPTIPFGKVPILEVDGVIIHQSLAIARYLARESGLAGQTPVEQALADAIVDTIDDFMMLFPWAEKNQDVKEKAFNDILTNKAPELLKDLDTFLGDKKWFVGKSVTWADFYWDVCSTTLLSYKADLADKYPRLLALRDRVEALPAIAAWIQKRPKTAI</sequence>
<comment type="function">
    <text evidence="4">Bifunctional enzyme which catalyzes both the conversion of PGH2 to PGD2, a prostaglandin involved in smooth muscle contraction/relaxation and a potent inhibitor of platelet aggregation, and the conjugation of glutathione with a wide range of aryl halides, organic isothiocyanates and alpha,beta-unsaturated carbonyls. Also exhibits low glutathione-peroxidase activity towards cumene hydroperoxide and t-butyl hydroperoxide.</text>
</comment>
<comment type="catalytic activity">
    <reaction evidence="4">
        <text>prostaglandin H2 = prostaglandin D2</text>
        <dbReference type="Rhea" id="RHEA:10600"/>
        <dbReference type="ChEBI" id="CHEBI:57405"/>
        <dbReference type="ChEBI" id="CHEBI:57406"/>
        <dbReference type="EC" id="5.3.99.2"/>
    </reaction>
    <physiologicalReaction direction="left-to-right" evidence="5">
        <dbReference type="Rhea" id="RHEA:10601"/>
    </physiologicalReaction>
</comment>
<comment type="catalytic activity">
    <reaction evidence="4">
        <text>RX + glutathione = an S-substituted glutathione + a halide anion + H(+)</text>
        <dbReference type="Rhea" id="RHEA:16437"/>
        <dbReference type="ChEBI" id="CHEBI:15378"/>
        <dbReference type="ChEBI" id="CHEBI:16042"/>
        <dbReference type="ChEBI" id="CHEBI:17792"/>
        <dbReference type="ChEBI" id="CHEBI:57925"/>
        <dbReference type="ChEBI" id="CHEBI:90779"/>
        <dbReference type="EC" id="2.5.1.18"/>
    </reaction>
</comment>
<comment type="catalytic activity">
    <reaction evidence="2">
        <text>2-glyceryl-prostaglandin H2 = 2-glyceryl-prostaglandin D2</text>
        <dbReference type="Rhea" id="RHEA:51232"/>
        <dbReference type="ChEBI" id="CHEBI:85166"/>
        <dbReference type="ChEBI" id="CHEBI:133979"/>
    </reaction>
    <physiologicalReaction direction="left-to-right" evidence="2">
        <dbReference type="Rhea" id="RHEA:51233"/>
    </physiologicalReaction>
</comment>
<comment type="cofactor">
    <cofactor evidence="4">
        <name>glutathione</name>
        <dbReference type="ChEBI" id="CHEBI:57925"/>
    </cofactor>
    <text evidence="4">Glutathione is required for the prostaglandin D synthase activity.</text>
</comment>
<comment type="biophysicochemical properties">
    <kinetics>
        <Vmax evidence="4">128.0 umol/min/mg enzyme with 1-bromo-2,4-dinitrobenzene as substrate</Vmax>
        <Vmax evidence="4">97.0 umol/min/mg enzyme with 1-chloro-2,4-dinitrobenzene as substrate</Vmax>
        <Vmax evidence="4">410.0 umol/min/mg enzyme with 1-fluoro-2,4-dinitrobenzene as substrate</Vmax>
        <Vmax evidence="4">116.0 umol/min/mg enzyme with 1-iodo-2,4-dinitrobenzene as substrate</Vmax>
        <Vmax evidence="4">67.0 umol/min/mg enzyme with 7-chloro-4-nitrobenz-2-oxa-1,3-diazole as substrate</Vmax>
        <Vmax evidence="4">1.4 umol/min/mg enzyme with 4-nitrobenzyl chloride as substrate</Vmax>
        <Vmax evidence="4">0.05 umol/min/mg enzyme with 1,2-dichloro-4-nitrobenzene as substrate</Vmax>
        <Vmax evidence="4">0.04 umol/min/mg enzyme with ethacrynic acid as substrate</Vmax>
        <Vmax evidence="4">2.8 umol/min/mg enzyme with 4-hydroxynon-2-enal as substrate</Vmax>
        <Vmax evidence="4">0.06 umol/min/mg enzyme with trans,trans-deca-2,4-dienal as substrate</Vmax>
        <Vmax evidence="4">0.02 umol/min/mg enzyme with trans-non-2-enal as substrate</Vmax>
        <Vmax evidence="4">0.5 umol/min/mg enzyme with cumene hydroperoxide as substrate</Vmax>
        <Vmax evidence="4">0.06 umol/min/mg enzyme with t-butyl hydroperoxide as substrate</Vmax>
        <Vmax evidence="4">12.6 umol/min/mg enzyme with allyl isothiocyanate as substrate</Vmax>
        <Vmax evidence="4">17.6 umol/min/mg enzyme with benzyl isothiocyanate as substrate</Vmax>
        <Vmax evidence="4">0.02 umol/min/mg enzyme with Delta5-androstene-3,17-dione as substrate</Vmax>
        <Vmax evidence="4">0.11 umol/min/mg enzyme with 4-nitrophenyl acetate as substrate</Vmax>
    </kinetics>
</comment>
<comment type="subcellular location">
    <subcellularLocation>
        <location>Cytoplasm</location>
    </subcellularLocation>
</comment>
<comment type="tissue specificity">
    <text evidence="3 4">Highly expressed in liver, kidney, small intestine and colon, moderately in pancreas, bone marrow, lung and ovary, and expressed at low levels in spleen, thymus, heart and brain. Not detected in oviduct or skin (at protein level) (PubMed:9657971). Expressed in liver (PubMed:11572089).</text>
</comment>
<comment type="induction">
    <text evidence="3">Significantly increased expression by estrogen. Up-regulated after 1 hour of exposure to estrogen. Expression persists through 72 hours.</text>
</comment>
<comment type="similarity">
    <text evidence="5">Belongs to the GST superfamily. Sigma family.</text>
</comment>
<reference key="1">
    <citation type="journal article" date="1998" name="Biochem. J.">
        <title>Sequence, catalytic properties and expression of chicken glutathione-dependent prostaglandin D2 synthase, a novel class Sigma glutathione S-transferase.</title>
        <authorList>
            <person name="Thomson A.M."/>
            <person name="Meyer D.J."/>
            <person name="Hayes J.D."/>
        </authorList>
    </citation>
    <scope>NUCLEOTIDE SEQUENCE [MRNA]</scope>
    <scope>FUNCTION</scope>
    <scope>CATALYTIC ACTIVITY</scope>
    <scope>COFACTOR</scope>
    <scope>BIOPHYSICOCHEMICAL PROPERTIES</scope>
    <scope>TISSUE SPECIFICITY</scope>
    <source>
        <tissue>Spleen</tissue>
    </source>
</reference>
<reference key="2">
    <citation type="journal article" date="2001" name="Cell Tissue Res.">
        <title>Identification of estrogen-responsive genes in chick liver.</title>
        <authorList>
            <person name="Zhu Y."/>
            <person name="Wang M."/>
            <person name="Lin H."/>
            <person name="Li Z."/>
            <person name="Luo J."/>
        </authorList>
    </citation>
    <scope>TISSUE SPECIFICITY</scope>
    <scope>INDUCTION</scope>
</reference>
<proteinExistence type="evidence at protein level"/>
<protein>
    <recommendedName>
        <fullName evidence="5">Hematopoietic prostaglandin D synthase</fullName>
        <shortName>H-PGDS</shortName>
        <ecNumber evidence="4">5.3.99.2</ecNumber>
    </recommendedName>
    <alternativeName>
        <fullName>GST class-sigma</fullName>
    </alternativeName>
    <alternativeName>
        <fullName>Glutathione S-transferase</fullName>
        <ecNumber evidence="4">2.5.1.18</ecNumber>
    </alternativeName>
    <alternativeName>
        <fullName>Glutathione-dependent PGD synthase</fullName>
    </alternativeName>
    <alternativeName>
        <fullName>Glutathione-requiring prostaglandin D synthase</fullName>
    </alternativeName>
    <alternativeName>
        <fullName>Prostaglandin-H2 D-isomerase</fullName>
    </alternativeName>
</protein>
<accession>O73888</accession>
<keyword id="KW-0963">Cytoplasm</keyword>
<keyword id="KW-0275">Fatty acid biosynthesis</keyword>
<keyword id="KW-0276">Fatty acid metabolism</keyword>
<keyword id="KW-0413">Isomerase</keyword>
<keyword id="KW-0444">Lipid biosynthesis</keyword>
<keyword id="KW-0443">Lipid metabolism</keyword>
<keyword id="KW-0643">Prostaglandin biosynthesis</keyword>
<keyword id="KW-0644">Prostaglandin metabolism</keyword>
<keyword id="KW-1185">Reference proteome</keyword>
<keyword id="KW-0808">Transferase</keyword>
<evidence type="ECO:0000250" key="1"/>
<evidence type="ECO:0000250" key="2">
    <source>
        <dbReference type="UniProtKB" id="O60760"/>
    </source>
</evidence>
<evidence type="ECO:0000269" key="3">
    <source>
    </source>
</evidence>
<evidence type="ECO:0000269" key="4">
    <source>
    </source>
</evidence>
<evidence type="ECO:0000305" key="5"/>
<organism>
    <name type="scientific">Gallus gallus</name>
    <name type="common">Chicken</name>
    <dbReference type="NCBI Taxonomy" id="9031"/>
    <lineage>
        <taxon>Eukaryota</taxon>
        <taxon>Metazoa</taxon>
        <taxon>Chordata</taxon>
        <taxon>Craniata</taxon>
        <taxon>Vertebrata</taxon>
        <taxon>Euteleostomi</taxon>
        <taxon>Archelosauria</taxon>
        <taxon>Archosauria</taxon>
        <taxon>Dinosauria</taxon>
        <taxon>Saurischia</taxon>
        <taxon>Theropoda</taxon>
        <taxon>Coelurosauria</taxon>
        <taxon>Aves</taxon>
        <taxon>Neognathae</taxon>
        <taxon>Galloanserae</taxon>
        <taxon>Galliformes</taxon>
        <taxon>Phasianidae</taxon>
        <taxon>Phasianinae</taxon>
        <taxon>Gallus</taxon>
    </lineage>
</organism>
<gene>
    <name type="primary">HPGDS</name>
    <name type="synonym">GSTS</name>
    <name type="synonym">PGDS</name>
    <name type="synonym">PTGDS2</name>
</gene>
<dbReference type="EC" id="5.3.99.2" evidence="4"/>
<dbReference type="EC" id="2.5.1.18" evidence="4"/>
<dbReference type="EMBL" id="AJ006405">
    <property type="protein sequence ID" value="CAA07005.1"/>
    <property type="molecule type" value="mRNA"/>
</dbReference>
<dbReference type="RefSeq" id="NP_990342.1">
    <property type="nucleotide sequence ID" value="NM_205011.2"/>
</dbReference>
<dbReference type="RefSeq" id="XP_046771487.1">
    <property type="nucleotide sequence ID" value="XM_046915531.1"/>
</dbReference>
<dbReference type="RefSeq" id="XP_046795872.1">
    <property type="nucleotide sequence ID" value="XM_046939916.1"/>
</dbReference>
<dbReference type="SMR" id="O73888"/>
<dbReference type="FunCoup" id="O73888">
    <property type="interactions" value="46"/>
</dbReference>
<dbReference type="STRING" id="9031.ENSGALP00000016919"/>
<dbReference type="PaxDb" id="9031-ENSGALP00000016919"/>
<dbReference type="Ensembl" id="ENSGALT00010013205.1">
    <property type="protein sequence ID" value="ENSGALP00010007767.1"/>
    <property type="gene ID" value="ENSGALG00010005518.1"/>
</dbReference>
<dbReference type="GeneID" id="395863"/>
<dbReference type="KEGG" id="gga:395863"/>
<dbReference type="CTD" id="27306"/>
<dbReference type="VEuPathDB" id="HostDB:geneid_395863"/>
<dbReference type="eggNOG" id="KOG1695">
    <property type="taxonomic scope" value="Eukaryota"/>
</dbReference>
<dbReference type="GeneTree" id="ENSGT00940000160278"/>
<dbReference type="HOGENOM" id="CLU_039475_1_0_1"/>
<dbReference type="InParanoid" id="O73888"/>
<dbReference type="OMA" id="EVRPYFM"/>
<dbReference type="OrthoDB" id="414243at2759"/>
<dbReference type="PhylomeDB" id="O73888"/>
<dbReference type="TreeFam" id="TF105321"/>
<dbReference type="BRENDA" id="5.3.99.2">
    <property type="organism ID" value="1306"/>
</dbReference>
<dbReference type="Reactome" id="R-GGA-156590">
    <property type="pathway name" value="Glutathione conjugation"/>
</dbReference>
<dbReference type="Reactome" id="R-GGA-2162123">
    <property type="pathway name" value="Synthesis of Prostaglandins (PG) and Thromboxanes (TX)"/>
</dbReference>
<dbReference type="PRO" id="PR:O73888"/>
<dbReference type="Proteomes" id="UP000000539">
    <property type="component" value="Chromosome 4"/>
</dbReference>
<dbReference type="Bgee" id="ENSGALG00000010402">
    <property type="expression patterns" value="Expressed in kidney and 10 other cell types or tissues"/>
</dbReference>
<dbReference type="GO" id="GO:0005737">
    <property type="term" value="C:cytoplasm"/>
    <property type="evidence" value="ECO:0007669"/>
    <property type="project" value="UniProtKB-SubCell"/>
</dbReference>
<dbReference type="GO" id="GO:0005509">
    <property type="term" value="F:calcium ion binding"/>
    <property type="evidence" value="ECO:0000250"/>
    <property type="project" value="UniProtKB"/>
</dbReference>
<dbReference type="GO" id="GO:0004364">
    <property type="term" value="F:glutathione transferase activity"/>
    <property type="evidence" value="ECO:0000318"/>
    <property type="project" value="GO_Central"/>
</dbReference>
<dbReference type="GO" id="GO:0000287">
    <property type="term" value="F:magnesium ion binding"/>
    <property type="evidence" value="ECO:0000250"/>
    <property type="project" value="UniProtKB"/>
</dbReference>
<dbReference type="GO" id="GO:0004667">
    <property type="term" value="F:prostaglandin-D synthase activity"/>
    <property type="evidence" value="ECO:0000250"/>
    <property type="project" value="UniProtKB"/>
</dbReference>
<dbReference type="GO" id="GO:0006749">
    <property type="term" value="P:glutathione metabolic process"/>
    <property type="evidence" value="ECO:0000318"/>
    <property type="project" value="GO_Central"/>
</dbReference>
<dbReference type="GO" id="GO:0001516">
    <property type="term" value="P:prostaglandin biosynthetic process"/>
    <property type="evidence" value="ECO:0007669"/>
    <property type="project" value="UniProtKB-KW"/>
</dbReference>
<dbReference type="GO" id="GO:0006693">
    <property type="term" value="P:prostaglandin metabolic process"/>
    <property type="evidence" value="ECO:0000250"/>
    <property type="project" value="UniProtKB"/>
</dbReference>
<dbReference type="CDD" id="cd10295">
    <property type="entry name" value="GST_C_Sigma"/>
    <property type="match status" value="1"/>
</dbReference>
<dbReference type="CDD" id="cd03039">
    <property type="entry name" value="GST_N_Sigma_like"/>
    <property type="match status" value="1"/>
</dbReference>
<dbReference type="FunFam" id="1.20.1050.10:FF:000035">
    <property type="entry name" value="Hematopoietic prostaglandin D synthase"/>
    <property type="match status" value="1"/>
</dbReference>
<dbReference type="FunFam" id="3.40.30.10:FF:000035">
    <property type="entry name" value="hematopoietic prostaglandin D synthase"/>
    <property type="match status" value="1"/>
</dbReference>
<dbReference type="Gene3D" id="1.20.1050.10">
    <property type="match status" value="1"/>
</dbReference>
<dbReference type="Gene3D" id="3.40.30.10">
    <property type="entry name" value="Glutaredoxin"/>
    <property type="match status" value="1"/>
</dbReference>
<dbReference type="InterPro" id="IPR010987">
    <property type="entry name" value="Glutathione-S-Trfase_C-like"/>
</dbReference>
<dbReference type="InterPro" id="IPR036282">
    <property type="entry name" value="Glutathione-S-Trfase_C_sf"/>
</dbReference>
<dbReference type="InterPro" id="IPR004045">
    <property type="entry name" value="Glutathione_S-Trfase_N"/>
</dbReference>
<dbReference type="InterPro" id="IPR004046">
    <property type="entry name" value="GST_C"/>
</dbReference>
<dbReference type="InterPro" id="IPR050213">
    <property type="entry name" value="GST_superfamily"/>
</dbReference>
<dbReference type="InterPro" id="IPR036249">
    <property type="entry name" value="Thioredoxin-like_sf"/>
</dbReference>
<dbReference type="PANTHER" id="PTHR11571">
    <property type="entry name" value="GLUTATHIONE S-TRANSFERASE"/>
    <property type="match status" value="1"/>
</dbReference>
<dbReference type="PANTHER" id="PTHR11571:SF224">
    <property type="entry name" value="HEMATOPOIETIC PROSTAGLANDIN D SYNTHASE"/>
    <property type="match status" value="1"/>
</dbReference>
<dbReference type="Pfam" id="PF14497">
    <property type="entry name" value="GST_C_3"/>
    <property type="match status" value="1"/>
</dbReference>
<dbReference type="Pfam" id="PF02798">
    <property type="entry name" value="GST_N"/>
    <property type="match status" value="1"/>
</dbReference>
<dbReference type="SFLD" id="SFLDG01205">
    <property type="entry name" value="AMPS.1"/>
    <property type="match status" value="1"/>
</dbReference>
<dbReference type="SFLD" id="SFLDG00363">
    <property type="entry name" value="AMPS_(cytGST):_Alpha-__Mu-__Pi"/>
    <property type="match status" value="1"/>
</dbReference>
<dbReference type="SUPFAM" id="SSF47616">
    <property type="entry name" value="GST C-terminal domain-like"/>
    <property type="match status" value="1"/>
</dbReference>
<dbReference type="SUPFAM" id="SSF52833">
    <property type="entry name" value="Thioredoxin-like"/>
    <property type="match status" value="1"/>
</dbReference>
<dbReference type="PROSITE" id="PS50405">
    <property type="entry name" value="GST_CTER"/>
    <property type="match status" value="1"/>
</dbReference>
<dbReference type="PROSITE" id="PS50404">
    <property type="entry name" value="GST_NTER"/>
    <property type="match status" value="1"/>
</dbReference>
<feature type="initiator methionine" description="Removed" evidence="1">
    <location>
        <position position="1"/>
    </location>
</feature>
<feature type="chain" id="PRO_0000185937" description="Hematopoietic prostaglandin D synthase">
    <location>
        <begin position="2"/>
        <end position="199"/>
    </location>
</feature>
<feature type="domain" description="GST N-terminal">
    <location>
        <begin position="2"/>
        <end position="79"/>
    </location>
</feature>
<feature type="domain" description="GST C-terminal">
    <location>
        <begin position="81"/>
        <end position="199"/>
    </location>
</feature>
<feature type="binding site" evidence="2">
    <location>
        <position position="8"/>
    </location>
    <ligand>
        <name>glutathione</name>
        <dbReference type="ChEBI" id="CHEBI:57925"/>
    </ligand>
</feature>
<feature type="binding site" evidence="2">
    <location>
        <position position="14"/>
    </location>
    <ligand>
        <name>glutathione</name>
        <dbReference type="ChEBI" id="CHEBI:57925"/>
    </ligand>
</feature>
<feature type="binding site" evidence="2">
    <location>
        <position position="39"/>
    </location>
    <ligand>
        <name>glutathione</name>
        <dbReference type="ChEBI" id="CHEBI:57925"/>
    </ligand>
</feature>
<feature type="binding site" evidence="2">
    <location>
        <begin position="49"/>
        <end position="51"/>
    </location>
    <ligand>
        <name>glutathione</name>
        <dbReference type="ChEBI" id="CHEBI:57925"/>
    </ligand>
</feature>
<feature type="binding site" evidence="2">
    <location>
        <begin position="63"/>
        <end position="64"/>
    </location>
    <ligand>
        <name>glutathione</name>
        <dbReference type="ChEBI" id="CHEBI:57925"/>
    </ligand>
</feature>